<keyword id="KW-0028">Amino-acid biosynthesis</keyword>
<keyword id="KW-0057">Aromatic amino acid biosynthesis</keyword>
<keyword id="KW-0963">Cytoplasm</keyword>
<keyword id="KW-1185">Reference proteome</keyword>
<keyword id="KW-0808">Transferase</keyword>
<protein>
    <recommendedName>
        <fullName evidence="1">3-phosphoshikimate 1-carboxyvinyltransferase</fullName>
        <ecNumber evidence="1">2.5.1.19</ecNumber>
    </recommendedName>
    <alternativeName>
        <fullName evidence="1">5-enolpyruvylshikimate-3-phosphate synthase</fullName>
        <shortName evidence="1">EPSP synthase</shortName>
        <shortName evidence="1">EPSPS</shortName>
    </alternativeName>
</protein>
<dbReference type="EC" id="2.5.1.19" evidence="1"/>
<dbReference type="EMBL" id="CP000254">
    <property type="protein sequence ID" value="ABD40781.1"/>
    <property type="molecule type" value="Genomic_DNA"/>
</dbReference>
<dbReference type="RefSeq" id="WP_011448060.1">
    <property type="nucleotide sequence ID" value="NC_007796.1"/>
</dbReference>
<dbReference type="SMR" id="Q2FQ54"/>
<dbReference type="FunCoup" id="Q2FQ54">
    <property type="interactions" value="128"/>
</dbReference>
<dbReference type="STRING" id="323259.Mhun_1031"/>
<dbReference type="EnsemblBacteria" id="ABD40781">
    <property type="protein sequence ID" value="ABD40781"/>
    <property type="gene ID" value="Mhun_1031"/>
</dbReference>
<dbReference type="GeneID" id="3924639"/>
<dbReference type="KEGG" id="mhu:Mhun_1031"/>
<dbReference type="eggNOG" id="arCOG04134">
    <property type="taxonomic scope" value="Archaea"/>
</dbReference>
<dbReference type="HOGENOM" id="CLU_024321_0_0_2"/>
<dbReference type="InParanoid" id="Q2FQ54"/>
<dbReference type="OrthoDB" id="43788at2157"/>
<dbReference type="UniPathway" id="UPA00053"/>
<dbReference type="Proteomes" id="UP000001941">
    <property type="component" value="Chromosome"/>
</dbReference>
<dbReference type="GO" id="GO:0005737">
    <property type="term" value="C:cytoplasm"/>
    <property type="evidence" value="ECO:0007669"/>
    <property type="project" value="UniProtKB-SubCell"/>
</dbReference>
<dbReference type="GO" id="GO:0003866">
    <property type="term" value="F:3-phosphoshikimate 1-carboxyvinyltransferase activity"/>
    <property type="evidence" value="ECO:0007669"/>
    <property type="project" value="UniProtKB-UniRule"/>
</dbReference>
<dbReference type="GO" id="GO:0008652">
    <property type="term" value="P:amino acid biosynthetic process"/>
    <property type="evidence" value="ECO:0007669"/>
    <property type="project" value="UniProtKB-KW"/>
</dbReference>
<dbReference type="GO" id="GO:0009073">
    <property type="term" value="P:aromatic amino acid family biosynthetic process"/>
    <property type="evidence" value="ECO:0007669"/>
    <property type="project" value="UniProtKB-KW"/>
</dbReference>
<dbReference type="GO" id="GO:0009423">
    <property type="term" value="P:chorismate biosynthetic process"/>
    <property type="evidence" value="ECO:0007669"/>
    <property type="project" value="UniProtKB-UniRule"/>
</dbReference>
<dbReference type="CDD" id="cd01556">
    <property type="entry name" value="EPSP_synthase"/>
    <property type="match status" value="1"/>
</dbReference>
<dbReference type="Gene3D" id="3.65.10.10">
    <property type="entry name" value="Enolpyruvate transferase domain"/>
    <property type="match status" value="2"/>
</dbReference>
<dbReference type="HAMAP" id="MF_00210">
    <property type="entry name" value="EPSP_synth"/>
    <property type="match status" value="1"/>
</dbReference>
<dbReference type="InterPro" id="IPR001986">
    <property type="entry name" value="Enolpyruvate_Tfrase_dom"/>
</dbReference>
<dbReference type="InterPro" id="IPR036968">
    <property type="entry name" value="Enolpyruvate_Tfrase_sf"/>
</dbReference>
<dbReference type="InterPro" id="IPR006264">
    <property type="entry name" value="EPSP_synthase"/>
</dbReference>
<dbReference type="InterPro" id="IPR023193">
    <property type="entry name" value="EPSP_synthase_CS"/>
</dbReference>
<dbReference type="InterPro" id="IPR013792">
    <property type="entry name" value="RNA3'P_cycl/enolpyr_Trfase_a/b"/>
</dbReference>
<dbReference type="NCBIfam" id="TIGR01356">
    <property type="entry name" value="aroA"/>
    <property type="match status" value="1"/>
</dbReference>
<dbReference type="PANTHER" id="PTHR21090">
    <property type="entry name" value="AROM/DEHYDROQUINATE SYNTHASE"/>
    <property type="match status" value="1"/>
</dbReference>
<dbReference type="PANTHER" id="PTHR21090:SF5">
    <property type="entry name" value="PENTAFUNCTIONAL AROM POLYPEPTIDE"/>
    <property type="match status" value="1"/>
</dbReference>
<dbReference type="Pfam" id="PF00275">
    <property type="entry name" value="EPSP_synthase"/>
    <property type="match status" value="1"/>
</dbReference>
<dbReference type="PIRSF" id="PIRSF000505">
    <property type="entry name" value="EPSPS"/>
    <property type="match status" value="1"/>
</dbReference>
<dbReference type="SUPFAM" id="SSF55205">
    <property type="entry name" value="EPT/RTPC-like"/>
    <property type="match status" value="1"/>
</dbReference>
<dbReference type="PROSITE" id="PS00885">
    <property type="entry name" value="EPSP_SYNTHASE_2"/>
    <property type="match status" value="1"/>
</dbReference>
<reference key="1">
    <citation type="journal article" date="2016" name="Stand. Genomic Sci.">
        <title>Complete genome sequence of Methanospirillum hungatei type strain JF1.</title>
        <authorList>
            <person name="Gunsalus R.P."/>
            <person name="Cook L.E."/>
            <person name="Crable B."/>
            <person name="Rohlin L."/>
            <person name="McDonald E."/>
            <person name="Mouttaki H."/>
            <person name="Sieber J.R."/>
            <person name="Poweleit N."/>
            <person name="Zhou H."/>
            <person name="Lapidus A.L."/>
            <person name="Daligault H.E."/>
            <person name="Land M."/>
            <person name="Gilna P."/>
            <person name="Ivanova N."/>
            <person name="Kyrpides N."/>
            <person name="Culley D.E."/>
            <person name="McInerney M.J."/>
        </authorList>
    </citation>
    <scope>NUCLEOTIDE SEQUENCE [LARGE SCALE GENOMIC DNA]</scope>
    <source>
        <strain>ATCC 27890 / DSM 864 / NBRC 100397 / JF-1</strain>
    </source>
</reference>
<organism>
    <name type="scientific">Methanospirillum hungatei JF-1 (strain ATCC 27890 / DSM 864 / NBRC 100397 / JF-1)</name>
    <dbReference type="NCBI Taxonomy" id="323259"/>
    <lineage>
        <taxon>Archaea</taxon>
        <taxon>Methanobacteriati</taxon>
        <taxon>Methanobacteriota</taxon>
        <taxon>Stenosarchaea group</taxon>
        <taxon>Methanomicrobia</taxon>
        <taxon>Methanomicrobiales</taxon>
        <taxon>Methanospirillaceae</taxon>
        <taxon>Methanospirillum</taxon>
    </lineage>
</organism>
<feature type="chain" id="PRO_1000099717" description="3-phosphoshikimate 1-carboxyvinyltransferase">
    <location>
        <begin position="1"/>
        <end position="430"/>
    </location>
</feature>
<feature type="active site" description="Proton acceptor" evidence="1">
    <location>
        <position position="314"/>
    </location>
</feature>
<feature type="binding site" evidence="1">
    <location>
        <position position="21"/>
    </location>
    <ligand>
        <name>3-phosphoshikimate</name>
        <dbReference type="ChEBI" id="CHEBI:145989"/>
    </ligand>
</feature>
<feature type="binding site" evidence="1">
    <location>
        <position position="21"/>
    </location>
    <ligand>
        <name>phosphoenolpyruvate</name>
        <dbReference type="ChEBI" id="CHEBI:58702"/>
    </ligand>
</feature>
<feature type="binding site" evidence="1">
    <location>
        <position position="22"/>
    </location>
    <ligand>
        <name>3-phosphoshikimate</name>
        <dbReference type="ChEBI" id="CHEBI:145989"/>
    </ligand>
</feature>
<feature type="binding site" evidence="1">
    <location>
        <position position="26"/>
    </location>
    <ligand>
        <name>3-phosphoshikimate</name>
        <dbReference type="ChEBI" id="CHEBI:145989"/>
    </ligand>
</feature>
<feature type="binding site" evidence="1">
    <location>
        <position position="92"/>
    </location>
    <ligand>
        <name>phosphoenolpyruvate</name>
        <dbReference type="ChEBI" id="CHEBI:58702"/>
    </ligand>
</feature>
<feature type="binding site" evidence="1">
    <location>
        <position position="120"/>
    </location>
    <ligand>
        <name>phosphoenolpyruvate</name>
        <dbReference type="ChEBI" id="CHEBI:58702"/>
    </ligand>
</feature>
<feature type="binding site" evidence="1">
    <location>
        <position position="165"/>
    </location>
    <ligand>
        <name>3-phosphoshikimate</name>
        <dbReference type="ChEBI" id="CHEBI:145989"/>
    </ligand>
</feature>
<feature type="binding site" evidence="1">
    <location>
        <position position="166"/>
    </location>
    <ligand>
        <name>3-phosphoshikimate</name>
        <dbReference type="ChEBI" id="CHEBI:145989"/>
    </ligand>
</feature>
<feature type="binding site" evidence="1">
    <location>
        <position position="167"/>
    </location>
    <ligand>
        <name>3-phosphoshikimate</name>
        <dbReference type="ChEBI" id="CHEBI:145989"/>
    </ligand>
</feature>
<feature type="binding site" evidence="1">
    <location>
        <position position="167"/>
    </location>
    <ligand>
        <name>phosphoenolpyruvate</name>
        <dbReference type="ChEBI" id="CHEBI:58702"/>
    </ligand>
</feature>
<feature type="binding site" evidence="1">
    <location>
        <position position="193"/>
    </location>
    <ligand>
        <name>3-phosphoshikimate</name>
        <dbReference type="ChEBI" id="CHEBI:145989"/>
    </ligand>
</feature>
<feature type="binding site" evidence="1">
    <location>
        <position position="314"/>
    </location>
    <ligand>
        <name>3-phosphoshikimate</name>
        <dbReference type="ChEBI" id="CHEBI:145989"/>
    </ligand>
</feature>
<feature type="binding site" evidence="1">
    <location>
        <position position="341"/>
    </location>
    <ligand>
        <name>3-phosphoshikimate</name>
        <dbReference type="ChEBI" id="CHEBI:145989"/>
    </ligand>
</feature>
<feature type="binding site" evidence="1">
    <location>
        <position position="345"/>
    </location>
    <ligand>
        <name>phosphoenolpyruvate</name>
        <dbReference type="ChEBI" id="CHEBI:58702"/>
    </ligand>
</feature>
<feature type="binding site" evidence="1">
    <location>
        <position position="386"/>
    </location>
    <ligand>
        <name>phosphoenolpyruvate</name>
        <dbReference type="ChEBI" id="CHEBI:58702"/>
    </ligand>
</feature>
<feature type="binding site" evidence="1">
    <location>
        <position position="411"/>
    </location>
    <ligand>
        <name>phosphoenolpyruvate</name>
        <dbReference type="ChEBI" id="CHEBI:58702"/>
    </ligand>
</feature>
<sequence>MQMNIGRCGPVCFSCSAPPSKSYTHRALIIAALADGQSEIIGQLDADDTRMTARALMQLGVRLDWSRENIRVQGTGGHLKAPVEEINIQDSGTSMRLLTGVSLLADGPVVLTGSGRMQERPLGPLIDTLNNAGAKITCLKNPGCPPVRIDGTFPAGDMYVDGSISSQFISSLLIAAPYADNDVHIHLTGDPVSLPYIMMTIDSMRAFGAEVLVDGDDKEPVFTISSQRRYKPQTYGIEGDFSSSSYWFALAAICGGSATISGLNPQSAQGDRRLLEILVNMGCSITEKRESIILSRDPDVLLKGIKVDMADCPDIVQTVCMVAAVSSSPTRITGVHHLRMKESDRIAAIANGLTTLGGRVETEEDVIVIHPAPLHGGIIHPENDHRTAMSFAVLGCFIGDVTILDAECVTKSYPGFWEELRRIWQNAVLC</sequence>
<name>AROA_METHJ</name>
<proteinExistence type="inferred from homology"/>
<gene>
    <name evidence="1" type="primary">aroA</name>
    <name type="ordered locus">Mhun_1031</name>
</gene>
<accession>Q2FQ54</accession>
<comment type="function">
    <text evidence="1">Catalyzes the transfer of the enolpyruvyl moiety of phosphoenolpyruvate (PEP) to the 5-hydroxyl of shikimate-3-phosphate (S3P) to produce enolpyruvyl shikimate-3-phosphate and inorganic phosphate.</text>
</comment>
<comment type="catalytic activity">
    <reaction evidence="1">
        <text>3-phosphoshikimate + phosphoenolpyruvate = 5-O-(1-carboxyvinyl)-3-phosphoshikimate + phosphate</text>
        <dbReference type="Rhea" id="RHEA:21256"/>
        <dbReference type="ChEBI" id="CHEBI:43474"/>
        <dbReference type="ChEBI" id="CHEBI:57701"/>
        <dbReference type="ChEBI" id="CHEBI:58702"/>
        <dbReference type="ChEBI" id="CHEBI:145989"/>
        <dbReference type="EC" id="2.5.1.19"/>
    </reaction>
    <physiologicalReaction direction="left-to-right" evidence="1">
        <dbReference type="Rhea" id="RHEA:21257"/>
    </physiologicalReaction>
</comment>
<comment type="pathway">
    <text evidence="1">Metabolic intermediate biosynthesis; chorismate biosynthesis.</text>
</comment>
<comment type="subunit">
    <text evidence="1">Monomer.</text>
</comment>
<comment type="subcellular location">
    <subcellularLocation>
        <location evidence="1">Cytoplasm</location>
    </subcellularLocation>
</comment>
<comment type="similarity">
    <text evidence="1">Belongs to the EPSP synthase family.</text>
</comment>
<evidence type="ECO:0000255" key="1">
    <source>
        <dbReference type="HAMAP-Rule" id="MF_00210"/>
    </source>
</evidence>